<protein>
    <recommendedName>
        <fullName>Protein NRT1/ PTR FAMILY 5.10</fullName>
        <shortName>AtNPF5.10</shortName>
    </recommendedName>
</protein>
<sequence>MSISGAVDEAGTPLLAVTVDYRNKPAVKSSSGGWRSAGFIIGVEVAERFAYYGISSNLITYLTGPLGQSTAAAAANVNAWSGTASLLPLLGAFVADSFLGRFRTILAASALYIVGLGVLTLSAMIPSDCKVSNLLSSCSPRFQVITFFSALYLVALAQGGHKPCVQAFGADQFDEKEPEECKAKSSFFNWWYFGMCFGTLTTLWVLNYIQDNLSWALGFGIPCIAMVVALVVLLLGTCTYRFSIRREDQSPFVRIGNVYVAAVKNWSVSALDVAAAEERLGLVSCSSSQQFSFLNKALVAKNGSCSIDELEEAKSVLRLAPIWLTCLVYAVVFAQSPTFFTKQGATMERSITPGYKISPATLQSFISLSIVIFIPIYDRVLIPIARSFTHKPGGITMLQRIGTGIFLSFLAMVVAALVEMKRLKTAADYGLVDSPDATVPMSVWWLVPQYVLFGITDVFAMVGLQEFFYDQVPNELRSVGLALYLSIFGIGNFLSSFMISIIEKATSQSGQASWFANNLNQAHLDYFYWLLACLSFIGLASYLYVAKSYVSKRLDTS</sequence>
<accession>Q0WP01</accession>
<accession>Q9SK95</accession>
<feature type="chain" id="PRO_0000399943" description="Protein NRT1/ PTR FAMILY 5.10">
    <location>
        <begin position="1"/>
        <end position="557"/>
    </location>
</feature>
<feature type="transmembrane region" description="Helical" evidence="3">
    <location>
        <begin position="49"/>
        <end position="67"/>
    </location>
</feature>
<feature type="transmembrane region" description="Helical" evidence="3">
    <location>
        <begin position="79"/>
        <end position="99"/>
    </location>
</feature>
<feature type="transmembrane region" description="Helical" evidence="3">
    <location>
        <begin position="105"/>
        <end position="125"/>
    </location>
</feature>
<feature type="transmembrane region" description="Helical" evidence="3">
    <location>
        <begin position="144"/>
        <end position="164"/>
    </location>
</feature>
<feature type="transmembrane region" description="Helical" evidence="3">
    <location>
        <begin position="186"/>
        <end position="206"/>
    </location>
</feature>
<feature type="transmembrane region" description="Helical" evidence="3">
    <location>
        <begin position="215"/>
        <end position="235"/>
    </location>
</feature>
<feature type="transmembrane region" description="Helical" evidence="3">
    <location>
        <begin position="320"/>
        <end position="340"/>
    </location>
</feature>
<feature type="transmembrane region" description="Helical" evidence="3">
    <location>
        <begin position="365"/>
        <end position="385"/>
    </location>
</feature>
<feature type="transmembrane region" description="Helical" evidence="3">
    <location>
        <begin position="401"/>
        <end position="421"/>
    </location>
</feature>
<feature type="transmembrane region" description="Helical" evidence="3">
    <location>
        <begin position="443"/>
        <end position="463"/>
    </location>
</feature>
<feature type="transmembrane region" description="Helical" evidence="3">
    <location>
        <begin position="479"/>
        <end position="499"/>
    </location>
</feature>
<feature type="transmembrane region" description="Helical" evidence="3">
    <location>
        <begin position="526"/>
        <end position="546"/>
    </location>
</feature>
<feature type="modified residue" description="Phosphothreonine" evidence="2">
    <location>
        <position position="104"/>
    </location>
</feature>
<dbReference type="EMBL" id="AC006551">
    <property type="protein sequence ID" value="AAF18524.1"/>
    <property type="status" value="ALT_SEQ"/>
    <property type="molecule type" value="Genomic_DNA"/>
</dbReference>
<dbReference type="EMBL" id="CP002684">
    <property type="protein sequence ID" value="AEE30254.1"/>
    <property type="molecule type" value="Genomic_DNA"/>
</dbReference>
<dbReference type="EMBL" id="AK229285">
    <property type="protein sequence ID" value="BAF01148.1"/>
    <property type="molecule type" value="mRNA"/>
</dbReference>
<dbReference type="EMBL" id="BT033034">
    <property type="protein sequence ID" value="ACE79042.1"/>
    <property type="molecule type" value="mRNA"/>
</dbReference>
<dbReference type="PIR" id="F86358">
    <property type="entry name" value="F86358"/>
</dbReference>
<dbReference type="RefSeq" id="NP_173670.2">
    <property type="nucleotide sequence ID" value="NM_102103.3"/>
</dbReference>
<dbReference type="SMR" id="Q0WP01"/>
<dbReference type="FunCoup" id="Q0WP01">
    <property type="interactions" value="2022"/>
</dbReference>
<dbReference type="STRING" id="3702.Q0WP01"/>
<dbReference type="PaxDb" id="3702-AT1G22540.1"/>
<dbReference type="ProteomicsDB" id="224843"/>
<dbReference type="EnsemblPlants" id="AT1G22540.1">
    <property type="protein sequence ID" value="AT1G22540.1"/>
    <property type="gene ID" value="AT1G22540"/>
</dbReference>
<dbReference type="GeneID" id="838860"/>
<dbReference type="Gramene" id="AT1G22540.1">
    <property type="protein sequence ID" value="AT1G22540.1"/>
    <property type="gene ID" value="AT1G22540"/>
</dbReference>
<dbReference type="KEGG" id="ath:AT1G22540"/>
<dbReference type="Araport" id="AT1G22540"/>
<dbReference type="TAIR" id="AT1G22540">
    <property type="gene designation" value="NPF5.10"/>
</dbReference>
<dbReference type="eggNOG" id="KOG1237">
    <property type="taxonomic scope" value="Eukaryota"/>
</dbReference>
<dbReference type="HOGENOM" id="CLU_009313_4_1_1"/>
<dbReference type="InParanoid" id="Q0WP01"/>
<dbReference type="OMA" id="QMMGVWF"/>
<dbReference type="PhylomeDB" id="Q0WP01"/>
<dbReference type="PRO" id="PR:Q0WP01"/>
<dbReference type="Proteomes" id="UP000006548">
    <property type="component" value="Chromosome 1"/>
</dbReference>
<dbReference type="ExpressionAtlas" id="Q0WP01">
    <property type="expression patterns" value="baseline and differential"/>
</dbReference>
<dbReference type="GO" id="GO:0016020">
    <property type="term" value="C:membrane"/>
    <property type="evidence" value="ECO:0007669"/>
    <property type="project" value="UniProtKB-SubCell"/>
</dbReference>
<dbReference type="GO" id="GO:0071916">
    <property type="term" value="F:dipeptide transmembrane transporter activity"/>
    <property type="evidence" value="ECO:0007669"/>
    <property type="project" value="InterPro"/>
</dbReference>
<dbReference type="GO" id="GO:0042937">
    <property type="term" value="F:tripeptide transmembrane transporter activity"/>
    <property type="evidence" value="ECO:0007669"/>
    <property type="project" value="InterPro"/>
</dbReference>
<dbReference type="CDD" id="cd17417">
    <property type="entry name" value="MFS_NPF5"/>
    <property type="match status" value="1"/>
</dbReference>
<dbReference type="FunFam" id="1.20.1250.20:FF:000147">
    <property type="entry name" value="Protein NRT1/ PTR family 5.10"/>
    <property type="match status" value="1"/>
</dbReference>
<dbReference type="Gene3D" id="1.20.1250.20">
    <property type="entry name" value="MFS general substrate transporter like domains"/>
    <property type="match status" value="1"/>
</dbReference>
<dbReference type="InterPro" id="IPR036259">
    <property type="entry name" value="MFS_trans_sf"/>
</dbReference>
<dbReference type="InterPro" id="IPR044739">
    <property type="entry name" value="NRT1/PTR"/>
</dbReference>
<dbReference type="InterPro" id="IPR000109">
    <property type="entry name" value="POT_fam"/>
</dbReference>
<dbReference type="InterPro" id="IPR018456">
    <property type="entry name" value="PTR2_symporter_CS"/>
</dbReference>
<dbReference type="PANTHER" id="PTHR11654">
    <property type="entry name" value="OLIGOPEPTIDE TRANSPORTER-RELATED"/>
    <property type="match status" value="1"/>
</dbReference>
<dbReference type="Pfam" id="PF00854">
    <property type="entry name" value="PTR2"/>
    <property type="match status" value="1"/>
</dbReference>
<dbReference type="SUPFAM" id="SSF103473">
    <property type="entry name" value="MFS general substrate transporter"/>
    <property type="match status" value="1"/>
</dbReference>
<dbReference type="PROSITE" id="PS01022">
    <property type="entry name" value="PTR2_1"/>
    <property type="match status" value="1"/>
</dbReference>
<keyword id="KW-0472">Membrane</keyword>
<keyword id="KW-0597">Phosphoprotein</keyword>
<keyword id="KW-1185">Reference proteome</keyword>
<keyword id="KW-0812">Transmembrane</keyword>
<keyword id="KW-1133">Transmembrane helix</keyword>
<keyword id="KW-0813">Transport</keyword>
<proteinExistence type="evidence at transcript level"/>
<gene>
    <name type="primary">NPF5.10</name>
    <name type="ordered locus">At1g22540</name>
    <name type="ORF">F12K8.12</name>
</gene>
<name>PTR9_ARATH</name>
<comment type="subcellular location">
    <subcellularLocation>
        <location evidence="1">Membrane</location>
        <topology evidence="1">Multi-pass membrane protein</topology>
    </subcellularLocation>
</comment>
<comment type="tissue specificity">
    <text evidence="4">Expressed in shoots, roots and stems. Detected in leaves, flowers and siliques.</text>
</comment>
<comment type="similarity">
    <text evidence="5">Belongs to the major facilitator superfamily. Proton-dependent oligopeptide transporter (POT/PTR) (TC 2.A.17) family.</text>
</comment>
<comment type="sequence caution" evidence="5">
    <conflict type="erroneous gene model prediction">
        <sequence resource="EMBL-CDS" id="AAF18524"/>
    </conflict>
</comment>
<reference key="1">
    <citation type="journal article" date="2000" name="Nature">
        <title>Sequence and analysis of chromosome 1 of the plant Arabidopsis thaliana.</title>
        <authorList>
            <person name="Theologis A."/>
            <person name="Ecker J.R."/>
            <person name="Palm C.J."/>
            <person name="Federspiel N.A."/>
            <person name="Kaul S."/>
            <person name="White O."/>
            <person name="Alonso J."/>
            <person name="Altafi H."/>
            <person name="Araujo R."/>
            <person name="Bowman C.L."/>
            <person name="Brooks S.Y."/>
            <person name="Buehler E."/>
            <person name="Chan A."/>
            <person name="Chao Q."/>
            <person name="Chen H."/>
            <person name="Cheuk R.F."/>
            <person name="Chin C.W."/>
            <person name="Chung M.K."/>
            <person name="Conn L."/>
            <person name="Conway A.B."/>
            <person name="Conway A.R."/>
            <person name="Creasy T.H."/>
            <person name="Dewar K."/>
            <person name="Dunn P."/>
            <person name="Etgu P."/>
            <person name="Feldblyum T.V."/>
            <person name="Feng J.-D."/>
            <person name="Fong B."/>
            <person name="Fujii C.Y."/>
            <person name="Gill J.E."/>
            <person name="Goldsmith A.D."/>
            <person name="Haas B."/>
            <person name="Hansen N.F."/>
            <person name="Hughes B."/>
            <person name="Huizar L."/>
            <person name="Hunter J.L."/>
            <person name="Jenkins J."/>
            <person name="Johnson-Hopson C."/>
            <person name="Khan S."/>
            <person name="Khaykin E."/>
            <person name="Kim C.J."/>
            <person name="Koo H.L."/>
            <person name="Kremenetskaia I."/>
            <person name="Kurtz D.B."/>
            <person name="Kwan A."/>
            <person name="Lam B."/>
            <person name="Langin-Hooper S."/>
            <person name="Lee A."/>
            <person name="Lee J.M."/>
            <person name="Lenz C.A."/>
            <person name="Li J.H."/>
            <person name="Li Y.-P."/>
            <person name="Lin X."/>
            <person name="Liu S.X."/>
            <person name="Liu Z.A."/>
            <person name="Luros J.S."/>
            <person name="Maiti R."/>
            <person name="Marziali A."/>
            <person name="Militscher J."/>
            <person name="Miranda M."/>
            <person name="Nguyen M."/>
            <person name="Nierman W.C."/>
            <person name="Osborne B.I."/>
            <person name="Pai G."/>
            <person name="Peterson J."/>
            <person name="Pham P.K."/>
            <person name="Rizzo M."/>
            <person name="Rooney T."/>
            <person name="Rowley D."/>
            <person name="Sakano H."/>
            <person name="Salzberg S.L."/>
            <person name="Schwartz J.R."/>
            <person name="Shinn P."/>
            <person name="Southwick A.M."/>
            <person name="Sun H."/>
            <person name="Tallon L.J."/>
            <person name="Tambunga G."/>
            <person name="Toriumi M.J."/>
            <person name="Town C.D."/>
            <person name="Utterback T."/>
            <person name="Van Aken S."/>
            <person name="Vaysberg M."/>
            <person name="Vysotskaia V.S."/>
            <person name="Walker M."/>
            <person name="Wu D."/>
            <person name="Yu G."/>
            <person name="Fraser C.M."/>
            <person name="Venter J.C."/>
            <person name="Davis R.W."/>
        </authorList>
    </citation>
    <scope>NUCLEOTIDE SEQUENCE [LARGE SCALE GENOMIC DNA]</scope>
    <source>
        <strain>cv. Columbia</strain>
    </source>
</reference>
<reference key="2">
    <citation type="journal article" date="2017" name="Plant J.">
        <title>Araport11: a complete reannotation of the Arabidopsis thaliana reference genome.</title>
        <authorList>
            <person name="Cheng C.Y."/>
            <person name="Krishnakumar V."/>
            <person name="Chan A.P."/>
            <person name="Thibaud-Nissen F."/>
            <person name="Schobel S."/>
            <person name="Town C.D."/>
        </authorList>
    </citation>
    <scope>GENOME REANNOTATION</scope>
    <source>
        <strain>cv. Columbia</strain>
    </source>
</reference>
<reference key="3">
    <citation type="submission" date="2006-07" db="EMBL/GenBank/DDBJ databases">
        <title>Large-scale analysis of RIKEN Arabidopsis full-length (RAFL) cDNAs.</title>
        <authorList>
            <person name="Totoki Y."/>
            <person name="Seki M."/>
            <person name="Ishida J."/>
            <person name="Nakajima M."/>
            <person name="Enju A."/>
            <person name="Kamiya A."/>
            <person name="Narusaka M."/>
            <person name="Shin-i T."/>
            <person name="Nakagawa M."/>
            <person name="Sakamoto N."/>
            <person name="Oishi K."/>
            <person name="Kohara Y."/>
            <person name="Kobayashi M."/>
            <person name="Toyoda A."/>
            <person name="Sakaki Y."/>
            <person name="Sakurai T."/>
            <person name="Iida K."/>
            <person name="Akiyama K."/>
            <person name="Satou M."/>
            <person name="Toyoda T."/>
            <person name="Konagaya A."/>
            <person name="Carninci P."/>
            <person name="Kawai J."/>
            <person name="Hayashizaki Y."/>
            <person name="Shinozaki K."/>
        </authorList>
    </citation>
    <scope>NUCLEOTIDE SEQUENCE [LARGE SCALE MRNA]</scope>
    <source>
        <strain>cv. Columbia</strain>
    </source>
</reference>
<reference key="4">
    <citation type="submission" date="2008-06" db="EMBL/GenBank/DDBJ databases">
        <title>Arabidopsis ORF clones.</title>
        <authorList>
            <person name="de los Reyes C."/>
            <person name="Quan R."/>
            <person name="Chen H."/>
            <person name="Bautista V."/>
            <person name="Kim C.J."/>
            <person name="Ecker J.R."/>
        </authorList>
    </citation>
    <scope>NUCLEOTIDE SEQUENCE [LARGE SCALE MRNA]</scope>
    <source>
        <strain>cv. Columbia</strain>
    </source>
</reference>
<reference key="5">
    <citation type="journal article" date="2007" name="FEBS Lett.">
        <title>Nitrate transporters and peptide transporters.</title>
        <authorList>
            <person name="Tsay Y.F."/>
            <person name="Chiu C.C."/>
            <person name="Tsai C.B."/>
            <person name="Ho C.H."/>
            <person name="Hsu P.K."/>
        </authorList>
    </citation>
    <scope>TISSUE SPECIFICITY</scope>
    <scope>GENE FAMILY</scope>
</reference>
<reference key="6">
    <citation type="journal article" date="2010" name="Plant Cell">
        <title>The Arabidopsis nitrate transporter NRT1.8 functions in nitrate removal from the xylem sap and mediates cadmium tolerance.</title>
        <authorList>
            <person name="Li J.Y."/>
            <person name="Fu Y.L."/>
            <person name="Pike S.M."/>
            <person name="Bao J."/>
            <person name="Tian W."/>
            <person name="Zhang Y."/>
            <person name="Chen C.Z."/>
            <person name="Zhang Y."/>
            <person name="Li H.M."/>
            <person name="Huang J."/>
            <person name="Li L.G."/>
            <person name="Schroeder J.I."/>
            <person name="Gassmann W."/>
            <person name="Gong J.M."/>
        </authorList>
    </citation>
    <scope>GENE FAMILY</scope>
</reference>
<reference key="7">
    <citation type="journal article" date="2014" name="Trends Plant Sci.">
        <title>A unified nomenclature of NITRATE TRANSPORTER 1/PEPTIDE TRANSPORTER family members in plants.</title>
        <authorList>
            <person name="Leran S."/>
            <person name="Varala K."/>
            <person name="Boyer J.C."/>
            <person name="Chiurazzi M."/>
            <person name="Crawford N."/>
            <person name="Daniel-Vedele F."/>
            <person name="David L."/>
            <person name="Dickstein R."/>
            <person name="Fernandez E."/>
            <person name="Forde B."/>
            <person name="Gassmann W."/>
            <person name="Geiger D."/>
            <person name="Gojon A."/>
            <person name="Gong J.M."/>
            <person name="Halkier B.A."/>
            <person name="Harris J.M."/>
            <person name="Hedrich R."/>
            <person name="Limami A.M."/>
            <person name="Rentsch D."/>
            <person name="Seo M."/>
            <person name="Tsay Y.F."/>
            <person name="Zhang M."/>
            <person name="Coruzzi G."/>
            <person name="Lacombe B."/>
        </authorList>
    </citation>
    <scope>GENE FAMILY</scope>
    <scope>NOMENCLATURE</scope>
</reference>
<evidence type="ECO:0000250" key="1"/>
<evidence type="ECO:0000250" key="2">
    <source>
        <dbReference type="UniProtKB" id="Q05085"/>
    </source>
</evidence>
<evidence type="ECO:0000255" key="3"/>
<evidence type="ECO:0000269" key="4">
    <source>
    </source>
</evidence>
<evidence type="ECO:0000305" key="5"/>
<organism>
    <name type="scientific">Arabidopsis thaliana</name>
    <name type="common">Mouse-ear cress</name>
    <dbReference type="NCBI Taxonomy" id="3702"/>
    <lineage>
        <taxon>Eukaryota</taxon>
        <taxon>Viridiplantae</taxon>
        <taxon>Streptophyta</taxon>
        <taxon>Embryophyta</taxon>
        <taxon>Tracheophyta</taxon>
        <taxon>Spermatophyta</taxon>
        <taxon>Magnoliopsida</taxon>
        <taxon>eudicotyledons</taxon>
        <taxon>Gunneridae</taxon>
        <taxon>Pentapetalae</taxon>
        <taxon>rosids</taxon>
        <taxon>malvids</taxon>
        <taxon>Brassicales</taxon>
        <taxon>Brassicaceae</taxon>
        <taxon>Camelineae</taxon>
        <taxon>Arabidopsis</taxon>
    </lineage>
</organism>